<sequence>MSIEPLTDEERADALDALPDWDYDDGRDAISRSFTFPDFSAAFAFMTRVALYAEKHDHHPEWSNVWNRVDILLTTHDAGGLSHRDVAMAEAIEALAE</sequence>
<comment type="catalytic activity">
    <reaction evidence="1">
        <text>(4aS,6R)-4a-hydroxy-L-erythro-5,6,7,8-tetrahydrobiopterin = (6R)-L-erythro-6,7-dihydrobiopterin + H2O</text>
        <dbReference type="Rhea" id="RHEA:11920"/>
        <dbReference type="ChEBI" id="CHEBI:15377"/>
        <dbReference type="ChEBI" id="CHEBI:15642"/>
        <dbReference type="ChEBI" id="CHEBI:43120"/>
        <dbReference type="EC" id="4.2.1.96"/>
    </reaction>
</comment>
<comment type="similarity">
    <text evidence="1">Belongs to the pterin-4-alpha-carbinolamine dehydratase family.</text>
</comment>
<keyword id="KW-0456">Lyase</keyword>
<keyword id="KW-1185">Reference proteome</keyword>
<protein>
    <recommendedName>
        <fullName evidence="1">Putative pterin-4-alpha-carbinolamine dehydratase</fullName>
        <shortName evidence="1">PHS</shortName>
        <ecNumber evidence="1">4.2.1.96</ecNumber>
    </recommendedName>
    <alternativeName>
        <fullName evidence="1">4-alpha-hydroxy-tetrahydropterin dehydratase</fullName>
    </alternativeName>
    <alternativeName>
        <fullName evidence="1">Pterin carbinolamine dehydratase</fullName>
        <shortName evidence="1">PCD</shortName>
    </alternativeName>
</protein>
<reference key="1">
    <citation type="journal article" date="2010" name="J. Bacteriol.">
        <title>Genome sequence of the dioxin-mineralizing bacterium Sphingomonas wittichii RW1.</title>
        <authorList>
            <person name="Miller T.R."/>
            <person name="Delcher A.L."/>
            <person name="Salzberg S.L."/>
            <person name="Saunders E."/>
            <person name="Detter J.C."/>
            <person name="Halden R.U."/>
        </authorList>
    </citation>
    <scope>NUCLEOTIDE SEQUENCE [LARGE SCALE GENOMIC DNA]</scope>
    <source>
        <strain>DSM 6014 / CCUG 31198 / JCM 15750 / NBRC 105917 / EY 4224 / RW1</strain>
    </source>
</reference>
<proteinExistence type="inferred from homology"/>
<dbReference type="EC" id="4.2.1.96" evidence="1"/>
<dbReference type="EMBL" id="CP000699">
    <property type="protein sequence ID" value="ABQ67783.1"/>
    <property type="molecule type" value="Genomic_DNA"/>
</dbReference>
<dbReference type="SMR" id="A5V667"/>
<dbReference type="STRING" id="392499.Swit_1419"/>
<dbReference type="PaxDb" id="392499-Swit_1419"/>
<dbReference type="KEGG" id="swi:Swit_1419"/>
<dbReference type="eggNOG" id="COG2154">
    <property type="taxonomic scope" value="Bacteria"/>
</dbReference>
<dbReference type="HOGENOM" id="CLU_081974_3_2_5"/>
<dbReference type="OrthoDB" id="9794987at2"/>
<dbReference type="Proteomes" id="UP000001989">
    <property type="component" value="Chromosome"/>
</dbReference>
<dbReference type="GO" id="GO:0008124">
    <property type="term" value="F:4-alpha-hydroxytetrahydrobiopterin dehydratase activity"/>
    <property type="evidence" value="ECO:0007669"/>
    <property type="project" value="UniProtKB-UniRule"/>
</dbReference>
<dbReference type="GO" id="GO:0006729">
    <property type="term" value="P:tetrahydrobiopterin biosynthetic process"/>
    <property type="evidence" value="ECO:0007669"/>
    <property type="project" value="InterPro"/>
</dbReference>
<dbReference type="CDD" id="cd00914">
    <property type="entry name" value="PCD_DCoH_subfamily_b"/>
    <property type="match status" value="1"/>
</dbReference>
<dbReference type="Gene3D" id="3.30.1360.20">
    <property type="entry name" value="Transcriptional coactivator/pterin dehydratase"/>
    <property type="match status" value="1"/>
</dbReference>
<dbReference type="HAMAP" id="MF_00434">
    <property type="entry name" value="Pterin_4_alpha"/>
    <property type="match status" value="1"/>
</dbReference>
<dbReference type="InterPro" id="IPR036428">
    <property type="entry name" value="PCD_sf"/>
</dbReference>
<dbReference type="InterPro" id="IPR001533">
    <property type="entry name" value="Pterin_deHydtase"/>
</dbReference>
<dbReference type="NCBIfam" id="NF002017">
    <property type="entry name" value="PRK00823.1-2"/>
    <property type="match status" value="1"/>
</dbReference>
<dbReference type="NCBIfam" id="NF002018">
    <property type="entry name" value="PRK00823.1-3"/>
    <property type="match status" value="1"/>
</dbReference>
<dbReference type="PANTHER" id="PTHR12599">
    <property type="entry name" value="PTERIN-4-ALPHA-CARBINOLAMINE DEHYDRATASE"/>
    <property type="match status" value="1"/>
</dbReference>
<dbReference type="PANTHER" id="PTHR12599:SF0">
    <property type="entry name" value="PTERIN-4-ALPHA-CARBINOLAMINE DEHYDRATASE"/>
    <property type="match status" value="1"/>
</dbReference>
<dbReference type="Pfam" id="PF01329">
    <property type="entry name" value="Pterin_4a"/>
    <property type="match status" value="1"/>
</dbReference>
<dbReference type="SUPFAM" id="SSF55248">
    <property type="entry name" value="PCD-like"/>
    <property type="match status" value="1"/>
</dbReference>
<name>PHS_RHIWR</name>
<accession>A5V667</accession>
<evidence type="ECO:0000255" key="1">
    <source>
        <dbReference type="HAMAP-Rule" id="MF_00434"/>
    </source>
</evidence>
<feature type="chain" id="PRO_1000192938" description="Putative pterin-4-alpha-carbinolamine dehydratase">
    <location>
        <begin position="1"/>
        <end position="97"/>
    </location>
</feature>
<gene>
    <name type="ordered locus">Swit_1419</name>
</gene>
<organism>
    <name type="scientific">Rhizorhabdus wittichii (strain DSM 6014 / CCUG 31198 / JCM 15750 / NBRC 105917 / EY 4224 / RW1)</name>
    <name type="common">Sphingomonas wittichii</name>
    <dbReference type="NCBI Taxonomy" id="392499"/>
    <lineage>
        <taxon>Bacteria</taxon>
        <taxon>Pseudomonadati</taxon>
        <taxon>Pseudomonadota</taxon>
        <taxon>Alphaproteobacteria</taxon>
        <taxon>Sphingomonadales</taxon>
        <taxon>Sphingomonadaceae</taxon>
        <taxon>Rhizorhabdus</taxon>
    </lineage>
</organism>